<reference key="1">
    <citation type="journal article" date="1999" name="Peptides">
        <title>Conopeptides from Conus striatus and Conus textile by cDNA cloning.</title>
        <authorList>
            <person name="Lu B.-S."/>
            <person name="Yu F."/>
            <person name="Zhao D."/>
            <person name="Huang P.-T."/>
            <person name="Huang C.-F."/>
        </authorList>
    </citation>
    <scope>NUCLEOTIDE SEQUENCE [MRNA]</scope>
    <source>
        <tissue>Venom duct</tissue>
    </source>
</reference>
<reference key="2">
    <citation type="journal article" date="2012" name="J. Proteome Res.">
        <title>Constrained de novo sequencing of conotoxins.</title>
        <authorList>
            <person name="Bhatia S."/>
            <person name="Kil Y.J."/>
            <person name="Ueberheide B."/>
            <person name="Chait B.T."/>
            <person name="Tayo L."/>
            <person name="Cruz L."/>
            <person name="Lu B."/>
            <person name="Yates J.R. III"/>
            <person name="Bern M."/>
        </authorList>
    </citation>
    <scope>IDENTIFICATION BY MASS SPECTROMETRY</scope>
    <scope>SUBCELLULAR LOCATION</scope>
    <source>
        <tissue>Venom</tissue>
    </source>
</reference>
<organism>
    <name type="scientific">Conus textile</name>
    <name type="common">Cloth-of-gold cone</name>
    <dbReference type="NCBI Taxonomy" id="6494"/>
    <lineage>
        <taxon>Eukaryota</taxon>
        <taxon>Metazoa</taxon>
        <taxon>Spiralia</taxon>
        <taxon>Lophotrochozoa</taxon>
        <taxon>Mollusca</taxon>
        <taxon>Gastropoda</taxon>
        <taxon>Caenogastropoda</taxon>
        <taxon>Neogastropoda</taxon>
        <taxon>Conoidea</taxon>
        <taxon>Conidae</taxon>
        <taxon>Conus</taxon>
        <taxon>Cylinder</taxon>
    </lineage>
</organism>
<comment type="function">
    <text evidence="1">Omega-conotoxins act at presynaptic membranes, they bind and block voltage-gated calcium channels (Cav).</text>
</comment>
<comment type="subcellular location">
    <subcellularLocation>
        <location evidence="4">Secreted</location>
    </subcellularLocation>
</comment>
<comment type="tissue specificity">
    <text evidence="6">Expressed by the venom duct.</text>
</comment>
<comment type="domain">
    <text evidence="2">The presence of a 'disulfide through disulfide knot' structurally defines this protein as a knottin.</text>
</comment>
<comment type="domain">
    <text evidence="5">The cysteine framework is VI/VII (C-C-CC-C-C).</text>
</comment>
<comment type="similarity">
    <text evidence="5">Belongs to the conotoxin O1 superfamily.</text>
</comment>
<accession>Q9XZK8</accession>
<protein>
    <recommendedName>
        <fullName>Omega-conotoxin-like TxO1</fullName>
    </recommendedName>
</protein>
<evidence type="ECO:0000250" key="1"/>
<evidence type="ECO:0000250" key="2">
    <source>
        <dbReference type="UniProtKB" id="Q26443"/>
    </source>
</evidence>
<evidence type="ECO:0000255" key="3"/>
<evidence type="ECO:0000269" key="4">
    <source>
    </source>
</evidence>
<evidence type="ECO:0000305" key="5"/>
<evidence type="ECO:0000305" key="6">
    <source>
    </source>
</evidence>
<sequence>MKLTCVVIVAVLFLTVWTFATADDSGNGLEKLFSNAHHEMKNPEASKLNERCLDAGEVCDIFFPTCCGYCILLFCA</sequence>
<feature type="signal peptide" evidence="3">
    <location>
        <begin position="1"/>
        <end position="22"/>
    </location>
</feature>
<feature type="propeptide" id="PRO_0000034950" evidence="5">
    <location>
        <begin position="23"/>
        <end position="50"/>
    </location>
</feature>
<feature type="peptide" id="PRO_0000034951" description="Omega-conotoxin-like TxO1" evidence="4">
    <location>
        <begin position="52"/>
        <end position="76"/>
    </location>
</feature>
<feature type="disulfide bond" evidence="2">
    <location>
        <begin position="52"/>
        <end position="67"/>
    </location>
</feature>
<feature type="disulfide bond" evidence="2">
    <location>
        <begin position="59"/>
        <end position="70"/>
    </location>
</feature>
<feature type="disulfide bond" evidence="2">
    <location>
        <begin position="66"/>
        <end position="75"/>
    </location>
</feature>
<dbReference type="EMBL" id="AF146354">
    <property type="protein sequence ID" value="AAD31914.1"/>
    <property type="molecule type" value="mRNA"/>
</dbReference>
<dbReference type="SMR" id="Q9XZK8"/>
<dbReference type="ConoServer" id="868">
    <property type="toxin name" value="TxO1 precursor"/>
</dbReference>
<dbReference type="GO" id="GO:0005576">
    <property type="term" value="C:extracellular region"/>
    <property type="evidence" value="ECO:0007669"/>
    <property type="project" value="UniProtKB-SubCell"/>
</dbReference>
<dbReference type="GO" id="GO:0044231">
    <property type="term" value="C:host cell presynaptic membrane"/>
    <property type="evidence" value="ECO:0007669"/>
    <property type="project" value="UniProtKB-KW"/>
</dbReference>
<dbReference type="GO" id="GO:0005246">
    <property type="term" value="F:calcium channel regulator activity"/>
    <property type="evidence" value="ECO:0007669"/>
    <property type="project" value="UniProtKB-KW"/>
</dbReference>
<dbReference type="GO" id="GO:0008200">
    <property type="term" value="F:ion channel inhibitor activity"/>
    <property type="evidence" value="ECO:0007669"/>
    <property type="project" value="InterPro"/>
</dbReference>
<dbReference type="GO" id="GO:0090729">
    <property type="term" value="F:toxin activity"/>
    <property type="evidence" value="ECO:0007669"/>
    <property type="project" value="UniProtKB-KW"/>
</dbReference>
<dbReference type="InterPro" id="IPR004214">
    <property type="entry name" value="Conotoxin"/>
</dbReference>
<dbReference type="InterPro" id="IPR012321">
    <property type="entry name" value="Conotoxin_omega-typ_CS"/>
</dbReference>
<dbReference type="Pfam" id="PF02950">
    <property type="entry name" value="Conotoxin"/>
    <property type="match status" value="1"/>
</dbReference>
<dbReference type="PROSITE" id="PS60004">
    <property type="entry name" value="OMEGA_CONOTOXIN"/>
    <property type="match status" value="1"/>
</dbReference>
<proteinExistence type="evidence at protein level"/>
<keyword id="KW-0108">Calcium channel impairing toxin</keyword>
<keyword id="KW-1015">Disulfide bond</keyword>
<keyword id="KW-0872">Ion channel impairing toxin</keyword>
<keyword id="KW-0960">Knottin</keyword>
<keyword id="KW-0528">Neurotoxin</keyword>
<keyword id="KW-0638">Presynaptic neurotoxin</keyword>
<keyword id="KW-0964">Secreted</keyword>
<keyword id="KW-0732">Signal</keyword>
<keyword id="KW-0800">Toxin</keyword>
<keyword id="KW-1218">Voltage-gated calcium channel impairing toxin</keyword>
<name>O1X1_CONTE</name>